<feature type="chain" id="PRO_1000095111" description="Glutamyl-tRNA(Gln) amidotransferase subunit A">
    <location>
        <begin position="1"/>
        <end position="496"/>
    </location>
</feature>
<feature type="active site" description="Charge relay system" evidence="1">
    <location>
        <position position="75"/>
    </location>
</feature>
<feature type="active site" description="Charge relay system" evidence="1">
    <location>
        <position position="150"/>
    </location>
</feature>
<feature type="active site" description="Acyl-ester intermediate" evidence="1">
    <location>
        <position position="174"/>
    </location>
</feature>
<accession>B1YPV8</accession>
<comment type="function">
    <text evidence="1">Allows the formation of correctly charged Gln-tRNA(Gln) through the transamidation of misacylated Glu-tRNA(Gln) in organisms which lack glutaminyl-tRNA synthetase. The reaction takes place in the presence of glutamine and ATP through an activated gamma-phospho-Glu-tRNA(Gln).</text>
</comment>
<comment type="catalytic activity">
    <reaction evidence="1">
        <text>L-glutamyl-tRNA(Gln) + L-glutamine + ATP + H2O = L-glutaminyl-tRNA(Gln) + L-glutamate + ADP + phosphate + H(+)</text>
        <dbReference type="Rhea" id="RHEA:17521"/>
        <dbReference type="Rhea" id="RHEA-COMP:9681"/>
        <dbReference type="Rhea" id="RHEA-COMP:9684"/>
        <dbReference type="ChEBI" id="CHEBI:15377"/>
        <dbReference type="ChEBI" id="CHEBI:15378"/>
        <dbReference type="ChEBI" id="CHEBI:29985"/>
        <dbReference type="ChEBI" id="CHEBI:30616"/>
        <dbReference type="ChEBI" id="CHEBI:43474"/>
        <dbReference type="ChEBI" id="CHEBI:58359"/>
        <dbReference type="ChEBI" id="CHEBI:78520"/>
        <dbReference type="ChEBI" id="CHEBI:78521"/>
        <dbReference type="ChEBI" id="CHEBI:456216"/>
        <dbReference type="EC" id="6.3.5.7"/>
    </reaction>
</comment>
<comment type="subunit">
    <text evidence="1">Heterotrimer of A, B and C subunits.</text>
</comment>
<comment type="similarity">
    <text evidence="1">Belongs to the amidase family. GatA subfamily.</text>
</comment>
<organism>
    <name type="scientific">Burkholderia ambifaria (strain MC40-6)</name>
    <dbReference type="NCBI Taxonomy" id="398577"/>
    <lineage>
        <taxon>Bacteria</taxon>
        <taxon>Pseudomonadati</taxon>
        <taxon>Pseudomonadota</taxon>
        <taxon>Betaproteobacteria</taxon>
        <taxon>Burkholderiales</taxon>
        <taxon>Burkholderiaceae</taxon>
        <taxon>Burkholderia</taxon>
        <taxon>Burkholderia cepacia complex</taxon>
    </lineage>
</organism>
<keyword id="KW-0067">ATP-binding</keyword>
<keyword id="KW-0436">Ligase</keyword>
<keyword id="KW-0547">Nucleotide-binding</keyword>
<keyword id="KW-0648">Protein biosynthesis</keyword>
<sequence length="496" mass="52340">MHAKSLTELRAALAAKECSAVELAQLYLKRIDAARDLNAFVHVDADLTLAQAKAADAELARGAGGALTGLPIAHKDVFVTRGWRSTAGSKMLANYESPFDATVVARLQAAGMVTLGKTNMDEFAMGSSNENSAFGAVKNPWDTNAVPGGSSGGSSAAVAARLAPAATGTDTGGSIRQPASFAGVTGIKPTYGRVSRYGMIAFASSLDQGGPMAQSASDCALLLNAMSGFDERDSTSLEREDEDFTRHLGQPWAAGNDAGKPLAGLRIGLPNEYFGDGLADDVRASIDAALKAYEALGATLVPVSLPKTELSIPVYYVIAPAEASSNLSRFDGVRFGHRAAQYGDLLDMYKKSRAEGFGPEVKRRILVGAYVLSHGYYDAYYLQAQKIRRIIAQDFQEAFKSCDVIMGPASPTVAWDLGAKGDDPVQMYLADIYTLSVSLAGLPGMSVPCGFGAGANAKRPVGLQIIGNYFNEARMLQVADAFQRATDWHKQVPAGV</sequence>
<gene>
    <name evidence="1" type="primary">gatA</name>
    <name type="ordered locus">BamMC406_3046</name>
</gene>
<name>GATA_BURA4</name>
<proteinExistence type="inferred from homology"/>
<dbReference type="EC" id="6.3.5.7" evidence="1"/>
<dbReference type="EMBL" id="CP001025">
    <property type="protein sequence ID" value="ACB65522.1"/>
    <property type="molecule type" value="Genomic_DNA"/>
</dbReference>
<dbReference type="RefSeq" id="WP_012364991.1">
    <property type="nucleotide sequence ID" value="NC_010551.1"/>
</dbReference>
<dbReference type="SMR" id="B1YPV8"/>
<dbReference type="KEGG" id="bac:BamMC406_3046"/>
<dbReference type="HOGENOM" id="CLU_009600_0_3_4"/>
<dbReference type="OrthoDB" id="9811471at2"/>
<dbReference type="Proteomes" id="UP000001680">
    <property type="component" value="Chromosome 1"/>
</dbReference>
<dbReference type="GO" id="GO:0030956">
    <property type="term" value="C:glutamyl-tRNA(Gln) amidotransferase complex"/>
    <property type="evidence" value="ECO:0007669"/>
    <property type="project" value="InterPro"/>
</dbReference>
<dbReference type="GO" id="GO:0005524">
    <property type="term" value="F:ATP binding"/>
    <property type="evidence" value="ECO:0007669"/>
    <property type="project" value="UniProtKB-KW"/>
</dbReference>
<dbReference type="GO" id="GO:0050567">
    <property type="term" value="F:glutaminyl-tRNA synthase (glutamine-hydrolyzing) activity"/>
    <property type="evidence" value="ECO:0007669"/>
    <property type="project" value="UniProtKB-UniRule"/>
</dbReference>
<dbReference type="GO" id="GO:0006412">
    <property type="term" value="P:translation"/>
    <property type="evidence" value="ECO:0007669"/>
    <property type="project" value="UniProtKB-UniRule"/>
</dbReference>
<dbReference type="Gene3D" id="3.90.1300.10">
    <property type="entry name" value="Amidase signature (AS) domain"/>
    <property type="match status" value="1"/>
</dbReference>
<dbReference type="HAMAP" id="MF_00120">
    <property type="entry name" value="GatA"/>
    <property type="match status" value="1"/>
</dbReference>
<dbReference type="InterPro" id="IPR000120">
    <property type="entry name" value="Amidase"/>
</dbReference>
<dbReference type="InterPro" id="IPR020556">
    <property type="entry name" value="Amidase_CS"/>
</dbReference>
<dbReference type="InterPro" id="IPR023631">
    <property type="entry name" value="Amidase_dom"/>
</dbReference>
<dbReference type="InterPro" id="IPR036928">
    <property type="entry name" value="AS_sf"/>
</dbReference>
<dbReference type="InterPro" id="IPR004412">
    <property type="entry name" value="GatA"/>
</dbReference>
<dbReference type="NCBIfam" id="TIGR00132">
    <property type="entry name" value="gatA"/>
    <property type="match status" value="1"/>
</dbReference>
<dbReference type="PANTHER" id="PTHR11895:SF151">
    <property type="entry name" value="GLUTAMYL-TRNA(GLN) AMIDOTRANSFERASE SUBUNIT A"/>
    <property type="match status" value="1"/>
</dbReference>
<dbReference type="PANTHER" id="PTHR11895">
    <property type="entry name" value="TRANSAMIDASE"/>
    <property type="match status" value="1"/>
</dbReference>
<dbReference type="Pfam" id="PF01425">
    <property type="entry name" value="Amidase"/>
    <property type="match status" value="1"/>
</dbReference>
<dbReference type="SUPFAM" id="SSF75304">
    <property type="entry name" value="Amidase signature (AS) enzymes"/>
    <property type="match status" value="1"/>
</dbReference>
<dbReference type="PROSITE" id="PS00571">
    <property type="entry name" value="AMIDASES"/>
    <property type="match status" value="1"/>
</dbReference>
<reference key="1">
    <citation type="submission" date="2008-04" db="EMBL/GenBank/DDBJ databases">
        <title>Complete sequence of chromosome 1 of Burkholderia ambifaria MC40-6.</title>
        <authorList>
            <person name="Copeland A."/>
            <person name="Lucas S."/>
            <person name="Lapidus A."/>
            <person name="Glavina del Rio T."/>
            <person name="Dalin E."/>
            <person name="Tice H."/>
            <person name="Pitluck S."/>
            <person name="Chain P."/>
            <person name="Malfatti S."/>
            <person name="Shin M."/>
            <person name="Vergez L."/>
            <person name="Lang D."/>
            <person name="Schmutz J."/>
            <person name="Larimer F."/>
            <person name="Land M."/>
            <person name="Hauser L."/>
            <person name="Kyrpides N."/>
            <person name="Lykidis A."/>
            <person name="Ramette A."/>
            <person name="Konstantinidis K."/>
            <person name="Tiedje J."/>
            <person name="Richardson P."/>
        </authorList>
    </citation>
    <scope>NUCLEOTIDE SEQUENCE [LARGE SCALE GENOMIC DNA]</scope>
    <source>
        <strain>MC40-6</strain>
    </source>
</reference>
<evidence type="ECO:0000255" key="1">
    <source>
        <dbReference type="HAMAP-Rule" id="MF_00120"/>
    </source>
</evidence>
<protein>
    <recommendedName>
        <fullName evidence="1">Glutamyl-tRNA(Gln) amidotransferase subunit A</fullName>
        <shortName evidence="1">Glu-ADT subunit A</shortName>
        <ecNumber evidence="1">6.3.5.7</ecNumber>
    </recommendedName>
</protein>